<proteinExistence type="inferred from homology"/>
<accession>Q1JN23</accession>
<keyword id="KW-0963">Cytoplasm</keyword>
<keyword id="KW-0255">Endonuclease</keyword>
<keyword id="KW-0378">Hydrolase</keyword>
<keyword id="KW-0479">Metal-binding</keyword>
<keyword id="KW-0540">Nuclease</keyword>
<keyword id="KW-0690">Ribosome biogenesis</keyword>
<keyword id="KW-0698">rRNA processing</keyword>
<keyword id="KW-0862">Zinc</keyword>
<reference key="1">
    <citation type="journal article" date="2006" name="Proc. Natl. Acad. Sci. U.S.A.">
        <title>Molecular genetic anatomy of inter- and intraserotype variation in the human bacterial pathogen group A Streptococcus.</title>
        <authorList>
            <person name="Beres S.B."/>
            <person name="Richter E.W."/>
            <person name="Nagiec M.J."/>
            <person name="Sumby P."/>
            <person name="Porcella S.F."/>
            <person name="DeLeo F.R."/>
            <person name="Musser J.M."/>
        </authorList>
    </citation>
    <scope>NUCLEOTIDE SEQUENCE [LARGE SCALE GENOMIC DNA]</scope>
    <source>
        <strain>MGAS9429</strain>
    </source>
</reference>
<sequence length="165" mass="19197">MYIEMIDETGQVSQEIMEQTLDLLNFAAQKTGKEEKEMSVTFVTNERSHELNLEYRDTDRPTDVISLEYKPETPILFSQEDLAADPSLAEMMAEFDAYIGELFISIDKAREQSQEYGHSFEREMGFLAVHGFLHINGYDHYTLEEEKEMFTLQEEILTAYGLTRQ</sequence>
<organism>
    <name type="scientific">Streptococcus pyogenes serotype M12 (strain MGAS9429)</name>
    <dbReference type="NCBI Taxonomy" id="370551"/>
    <lineage>
        <taxon>Bacteria</taxon>
        <taxon>Bacillati</taxon>
        <taxon>Bacillota</taxon>
        <taxon>Bacilli</taxon>
        <taxon>Lactobacillales</taxon>
        <taxon>Streptococcaceae</taxon>
        <taxon>Streptococcus</taxon>
    </lineage>
</organism>
<protein>
    <recommendedName>
        <fullName evidence="1">Endoribonuclease YbeY</fullName>
        <ecNumber evidence="1">3.1.-.-</ecNumber>
    </recommendedName>
</protein>
<evidence type="ECO:0000255" key="1">
    <source>
        <dbReference type="HAMAP-Rule" id="MF_00009"/>
    </source>
</evidence>
<evidence type="ECO:0000305" key="2"/>
<comment type="function">
    <text evidence="1">Single strand-specific metallo-endoribonuclease involved in late-stage 70S ribosome quality control and in maturation of the 3' terminus of the 16S rRNA.</text>
</comment>
<comment type="cofactor">
    <cofactor evidence="1">
        <name>Zn(2+)</name>
        <dbReference type="ChEBI" id="CHEBI:29105"/>
    </cofactor>
    <text evidence="1">Binds 1 zinc ion.</text>
</comment>
<comment type="subcellular location">
    <subcellularLocation>
        <location evidence="1">Cytoplasm</location>
    </subcellularLocation>
</comment>
<comment type="similarity">
    <text evidence="1">Belongs to the endoribonuclease YbeY family.</text>
</comment>
<comment type="sequence caution" evidence="2">
    <conflict type="erroneous initiation">
        <sequence resource="EMBL-CDS" id="ABF31576"/>
    </conflict>
</comment>
<gene>
    <name evidence="1" type="primary">ybeY</name>
    <name type="ordered locus">MGAS9429_Spy0388</name>
</gene>
<feature type="chain" id="PRO_0000284327" description="Endoribonuclease YbeY">
    <location>
        <begin position="1"/>
        <end position="165"/>
    </location>
</feature>
<feature type="binding site" evidence="1">
    <location>
        <position position="130"/>
    </location>
    <ligand>
        <name>Zn(2+)</name>
        <dbReference type="ChEBI" id="CHEBI:29105"/>
        <note>catalytic</note>
    </ligand>
</feature>
<feature type="binding site" evidence="1">
    <location>
        <position position="134"/>
    </location>
    <ligand>
        <name>Zn(2+)</name>
        <dbReference type="ChEBI" id="CHEBI:29105"/>
        <note>catalytic</note>
    </ligand>
</feature>
<feature type="binding site" evidence="1">
    <location>
        <position position="140"/>
    </location>
    <ligand>
        <name>Zn(2+)</name>
        <dbReference type="ChEBI" id="CHEBI:29105"/>
        <note>catalytic</note>
    </ligand>
</feature>
<dbReference type="EC" id="3.1.-.-" evidence="1"/>
<dbReference type="EMBL" id="CP000259">
    <property type="protein sequence ID" value="ABF31576.1"/>
    <property type="status" value="ALT_INIT"/>
    <property type="molecule type" value="Genomic_DNA"/>
</dbReference>
<dbReference type="RefSeq" id="WP_002985748.1">
    <property type="nucleotide sequence ID" value="NC_008021.1"/>
</dbReference>
<dbReference type="SMR" id="Q1JN23"/>
<dbReference type="GeneID" id="69901291"/>
<dbReference type="KEGG" id="spk:MGAS9429_Spy0388"/>
<dbReference type="HOGENOM" id="CLU_106710_3_0_9"/>
<dbReference type="Proteomes" id="UP000002433">
    <property type="component" value="Chromosome"/>
</dbReference>
<dbReference type="GO" id="GO:0005737">
    <property type="term" value="C:cytoplasm"/>
    <property type="evidence" value="ECO:0007669"/>
    <property type="project" value="UniProtKB-SubCell"/>
</dbReference>
<dbReference type="GO" id="GO:0004222">
    <property type="term" value="F:metalloendopeptidase activity"/>
    <property type="evidence" value="ECO:0007669"/>
    <property type="project" value="InterPro"/>
</dbReference>
<dbReference type="GO" id="GO:0004521">
    <property type="term" value="F:RNA endonuclease activity"/>
    <property type="evidence" value="ECO:0007669"/>
    <property type="project" value="UniProtKB-UniRule"/>
</dbReference>
<dbReference type="GO" id="GO:0008270">
    <property type="term" value="F:zinc ion binding"/>
    <property type="evidence" value="ECO:0007669"/>
    <property type="project" value="UniProtKB-UniRule"/>
</dbReference>
<dbReference type="GO" id="GO:0006364">
    <property type="term" value="P:rRNA processing"/>
    <property type="evidence" value="ECO:0007669"/>
    <property type="project" value="UniProtKB-UniRule"/>
</dbReference>
<dbReference type="Gene3D" id="3.40.390.30">
    <property type="entry name" value="Metalloproteases ('zincins'), catalytic domain"/>
    <property type="match status" value="1"/>
</dbReference>
<dbReference type="HAMAP" id="MF_00009">
    <property type="entry name" value="Endoribonucl_YbeY"/>
    <property type="match status" value="1"/>
</dbReference>
<dbReference type="InterPro" id="IPR023091">
    <property type="entry name" value="MetalPrtase_cat_dom_sf_prd"/>
</dbReference>
<dbReference type="InterPro" id="IPR002036">
    <property type="entry name" value="YbeY"/>
</dbReference>
<dbReference type="InterPro" id="IPR020549">
    <property type="entry name" value="YbeY_CS"/>
</dbReference>
<dbReference type="NCBIfam" id="TIGR00043">
    <property type="entry name" value="rRNA maturation RNase YbeY"/>
    <property type="match status" value="1"/>
</dbReference>
<dbReference type="PANTHER" id="PTHR46986">
    <property type="entry name" value="ENDORIBONUCLEASE YBEY, CHLOROPLASTIC"/>
    <property type="match status" value="1"/>
</dbReference>
<dbReference type="PANTHER" id="PTHR46986:SF1">
    <property type="entry name" value="ENDORIBONUCLEASE YBEY, CHLOROPLASTIC"/>
    <property type="match status" value="1"/>
</dbReference>
<dbReference type="Pfam" id="PF02130">
    <property type="entry name" value="YbeY"/>
    <property type="match status" value="1"/>
</dbReference>
<dbReference type="SUPFAM" id="SSF55486">
    <property type="entry name" value="Metalloproteases ('zincins'), catalytic domain"/>
    <property type="match status" value="1"/>
</dbReference>
<dbReference type="PROSITE" id="PS01306">
    <property type="entry name" value="UPF0054"/>
    <property type="match status" value="1"/>
</dbReference>
<name>YBEY_STRPC</name>